<keyword id="KW-0002">3D-structure</keyword>
<keyword id="KW-0238">DNA-binding</keyword>
<keyword id="KW-1185">Reference proteome</keyword>
<keyword id="KW-0804">Transcription</keyword>
<keyword id="KW-0805">Transcription regulation</keyword>
<feature type="chain" id="PRO_0000415280" description="Putative mycofactocin biosynthesis transcriptional regulator MftR">
    <location>
        <begin position="1"/>
        <end position="198"/>
    </location>
</feature>
<feature type="domain" description="HTH tetR-type" evidence="1">
    <location>
        <begin position="12"/>
        <end position="72"/>
    </location>
</feature>
<feature type="DNA-binding region" description="H-T-H motif" evidence="1">
    <location>
        <begin position="35"/>
        <end position="54"/>
    </location>
</feature>
<accession>P9WMB7</accession>
<accession>L0T674</accession>
<accession>P95037</accession>
<accession>Q7D9F1</accession>
<sequence length="198" mass="22264">MPHESRVGRRRSTTPHHISDVAIELFAAHGFTDVSVDDIARAAGIARRTLFRYYASKNAIPWGDFSTHLAQLQGLLDNIDSRIQLRDALRAALLAFNTFDESETIRHRKRMRVILQTPELQAYSMTMYAGWREVIAKFVARRSGGKTTDFMPQTVAWTMLGVALSAYEHWLRDESVSLTEALGAAFDVVGAGLDRLNQ</sequence>
<organism>
    <name type="scientific">Mycobacterium tuberculosis (strain ATCC 25618 / H37Rv)</name>
    <dbReference type="NCBI Taxonomy" id="83332"/>
    <lineage>
        <taxon>Bacteria</taxon>
        <taxon>Bacillati</taxon>
        <taxon>Actinomycetota</taxon>
        <taxon>Actinomycetes</taxon>
        <taxon>Mycobacteriales</taxon>
        <taxon>Mycobacteriaceae</taxon>
        <taxon>Mycobacterium</taxon>
        <taxon>Mycobacterium tuberculosis complex</taxon>
    </lineage>
</organism>
<comment type="function">
    <text>May regulate a gene cluster involved in mycofactocin expression. Mycofactocin is a conserved polypeptide that might serve as an electron carrier.</text>
</comment>
<reference key="1">
    <citation type="journal article" date="1998" name="Nature">
        <title>Deciphering the biology of Mycobacterium tuberculosis from the complete genome sequence.</title>
        <authorList>
            <person name="Cole S.T."/>
            <person name="Brosch R."/>
            <person name="Parkhill J."/>
            <person name="Garnier T."/>
            <person name="Churcher C.M."/>
            <person name="Harris D.E."/>
            <person name="Gordon S.V."/>
            <person name="Eiglmeier K."/>
            <person name="Gas S."/>
            <person name="Barry C.E. III"/>
            <person name="Tekaia F."/>
            <person name="Badcock K."/>
            <person name="Basham D."/>
            <person name="Brown D."/>
            <person name="Chillingworth T."/>
            <person name="Connor R."/>
            <person name="Davies R.M."/>
            <person name="Devlin K."/>
            <person name="Feltwell T."/>
            <person name="Gentles S."/>
            <person name="Hamlin N."/>
            <person name="Holroyd S."/>
            <person name="Hornsby T."/>
            <person name="Jagels K."/>
            <person name="Krogh A."/>
            <person name="McLean J."/>
            <person name="Moule S."/>
            <person name="Murphy L.D."/>
            <person name="Oliver S."/>
            <person name="Osborne J."/>
            <person name="Quail M.A."/>
            <person name="Rajandream M.A."/>
            <person name="Rogers J."/>
            <person name="Rutter S."/>
            <person name="Seeger K."/>
            <person name="Skelton S."/>
            <person name="Squares S."/>
            <person name="Squares R."/>
            <person name="Sulston J.E."/>
            <person name="Taylor K."/>
            <person name="Whitehead S."/>
            <person name="Barrell B.G."/>
        </authorList>
    </citation>
    <scope>NUCLEOTIDE SEQUENCE [LARGE SCALE GENOMIC DNA]</scope>
    <source>
        <strain>ATCC 25618 / H37Rv</strain>
    </source>
</reference>
<reference key="2">
    <citation type="journal article" date="2011" name="BMC Genomics">
        <title>Bioinformatic evidence for a widely distributed, ribosomally produced electron carrier precursor, its maturation proteins, and its nicotinoprotein redox partners.</title>
        <authorList>
            <person name="Haft D.H."/>
        </authorList>
    </citation>
    <scope>POSSIBLE FUNCTION</scope>
    <source>
        <strain>ATCC 25618 / H37Rv</strain>
    </source>
</reference>
<reference key="3">
    <citation type="journal article" date="2011" name="Mol. Cell. Proteomics">
        <title>Proteogenomic analysis of Mycobacterium tuberculosis by high resolution mass spectrometry.</title>
        <authorList>
            <person name="Kelkar D.S."/>
            <person name="Kumar D."/>
            <person name="Kumar P."/>
            <person name="Balakrishnan L."/>
            <person name="Muthusamy B."/>
            <person name="Yadav A.K."/>
            <person name="Shrivastava P."/>
            <person name="Marimuthu A."/>
            <person name="Anand S."/>
            <person name="Sundaram H."/>
            <person name="Kingsbury R."/>
            <person name="Harsha H.C."/>
            <person name="Nair B."/>
            <person name="Prasad T.S."/>
            <person name="Chauhan D.S."/>
            <person name="Katoch K."/>
            <person name="Katoch V.M."/>
            <person name="Kumar P."/>
            <person name="Chaerkady R."/>
            <person name="Ramachandran S."/>
            <person name="Dash D."/>
            <person name="Pandey A."/>
        </authorList>
    </citation>
    <scope>IDENTIFICATION BY MASS SPECTROMETRY [LARGE SCALE ANALYSIS]</scope>
    <source>
        <strain>ATCC 25618 / H37Rv</strain>
    </source>
</reference>
<protein>
    <recommendedName>
        <fullName>Putative mycofactocin biosynthesis transcriptional regulator MftR</fullName>
    </recommendedName>
</protein>
<name>MFTR_MYCTU</name>
<gene>
    <name type="primary">mftR</name>
    <name type="ordered locus">Rv0691c</name>
</gene>
<evidence type="ECO:0000255" key="1">
    <source>
        <dbReference type="PROSITE-ProRule" id="PRU00335"/>
    </source>
</evidence>
<proteinExistence type="evidence at protein level"/>
<dbReference type="EMBL" id="AL123456">
    <property type="protein sequence ID" value="CCP43434.1"/>
    <property type="molecule type" value="Genomic_DNA"/>
</dbReference>
<dbReference type="PIR" id="F70640">
    <property type="entry name" value="F70640"/>
</dbReference>
<dbReference type="RefSeq" id="NP_215205.1">
    <property type="nucleotide sequence ID" value="NC_000962.3"/>
</dbReference>
<dbReference type="RefSeq" id="WP_003403482.1">
    <property type="nucleotide sequence ID" value="NZ_NVQJ01000007.1"/>
</dbReference>
<dbReference type="PDB" id="8X0A">
    <property type="method" value="X-ray"/>
    <property type="resolution" value="2.70 A"/>
    <property type="chains" value="A/B/C/D/E=13-198"/>
</dbReference>
<dbReference type="PDBsum" id="8X0A"/>
<dbReference type="SMR" id="P9WMB7"/>
<dbReference type="FunCoup" id="P9WMB7">
    <property type="interactions" value="1"/>
</dbReference>
<dbReference type="STRING" id="83332.Rv0691c"/>
<dbReference type="PaxDb" id="83332-Rv0691c"/>
<dbReference type="DNASU" id="888296"/>
<dbReference type="GeneID" id="888296"/>
<dbReference type="KEGG" id="mtu:Rv0691c"/>
<dbReference type="KEGG" id="mtv:RVBD_0691c"/>
<dbReference type="TubercuList" id="Rv0691c"/>
<dbReference type="eggNOG" id="COG1309">
    <property type="taxonomic scope" value="Bacteria"/>
</dbReference>
<dbReference type="InParanoid" id="P9WMB7"/>
<dbReference type="OrthoDB" id="956698at2"/>
<dbReference type="Proteomes" id="UP000001584">
    <property type="component" value="Chromosome"/>
</dbReference>
<dbReference type="GO" id="GO:0003700">
    <property type="term" value="F:DNA-binding transcription factor activity"/>
    <property type="evidence" value="ECO:0000318"/>
    <property type="project" value="GO_Central"/>
</dbReference>
<dbReference type="GO" id="GO:0000976">
    <property type="term" value="F:transcription cis-regulatory region binding"/>
    <property type="evidence" value="ECO:0000318"/>
    <property type="project" value="GO_Central"/>
</dbReference>
<dbReference type="GO" id="GO:0006355">
    <property type="term" value="P:regulation of DNA-templated transcription"/>
    <property type="evidence" value="ECO:0000318"/>
    <property type="project" value="GO_Central"/>
</dbReference>
<dbReference type="Gene3D" id="1.10.10.60">
    <property type="entry name" value="Homeodomain-like"/>
    <property type="match status" value="1"/>
</dbReference>
<dbReference type="Gene3D" id="1.10.357.10">
    <property type="entry name" value="Tetracycline Repressor, domain 2"/>
    <property type="match status" value="1"/>
</dbReference>
<dbReference type="InterPro" id="IPR009057">
    <property type="entry name" value="Homeodomain-like_sf"/>
</dbReference>
<dbReference type="InterPro" id="IPR050109">
    <property type="entry name" value="HTH-type_TetR-like_transc_reg"/>
</dbReference>
<dbReference type="InterPro" id="IPR001647">
    <property type="entry name" value="HTH_TetR"/>
</dbReference>
<dbReference type="InterPro" id="IPR041347">
    <property type="entry name" value="MftR_C"/>
</dbReference>
<dbReference type="InterPro" id="IPR023851">
    <property type="entry name" value="Tscrpt_reg_TetR-type"/>
</dbReference>
<dbReference type="NCBIfam" id="TIGR03968">
    <property type="entry name" value="mycofact_TetR"/>
    <property type="match status" value="1"/>
</dbReference>
<dbReference type="PANTHER" id="PTHR30055">
    <property type="entry name" value="HTH-TYPE TRANSCRIPTIONAL REGULATOR RUTR"/>
    <property type="match status" value="1"/>
</dbReference>
<dbReference type="PANTHER" id="PTHR30055:SF238">
    <property type="entry name" value="MYCOFACTOCIN BIOSYNTHESIS TRANSCRIPTIONAL REGULATOR MFTR-RELATED"/>
    <property type="match status" value="1"/>
</dbReference>
<dbReference type="Pfam" id="PF17754">
    <property type="entry name" value="TetR_C_14"/>
    <property type="match status" value="1"/>
</dbReference>
<dbReference type="Pfam" id="PF00440">
    <property type="entry name" value="TetR_N"/>
    <property type="match status" value="1"/>
</dbReference>
<dbReference type="PRINTS" id="PR00455">
    <property type="entry name" value="HTHTETR"/>
</dbReference>
<dbReference type="SUPFAM" id="SSF46689">
    <property type="entry name" value="Homeodomain-like"/>
    <property type="match status" value="1"/>
</dbReference>
<dbReference type="PROSITE" id="PS50977">
    <property type="entry name" value="HTH_TETR_2"/>
    <property type="match status" value="1"/>
</dbReference>